<comment type="function">
    <text evidence="1 4">Component of the arsenate respiratory reductase (Arr) complex, which catalyzes the reduction of arsenate (As(V)) to arsenite (As(III)) (PubMed:9738904). Can use acetate as the electron donor (PubMed:9738904). ArrA is the arsenate-binding subunit (By similarity).</text>
</comment>
<comment type="catalytic activity">
    <reaction evidence="4">
        <text>arsenite + A + H2O = arsenate + AH2 + H(+)</text>
        <dbReference type="Rhea" id="RHEA:18449"/>
        <dbReference type="ChEBI" id="CHEBI:13193"/>
        <dbReference type="ChEBI" id="CHEBI:15377"/>
        <dbReference type="ChEBI" id="CHEBI:15378"/>
        <dbReference type="ChEBI" id="CHEBI:17499"/>
        <dbReference type="ChEBI" id="CHEBI:29242"/>
        <dbReference type="ChEBI" id="CHEBI:48597"/>
        <dbReference type="EC" id="1.20.99.1"/>
    </reaction>
</comment>
<comment type="cofactor">
    <cofactor evidence="7">
        <name>[4Fe-4S] cluster</name>
        <dbReference type="ChEBI" id="CHEBI:49883"/>
    </cofactor>
    <text evidence="1">Binds 1 [4Fe-4S] cluster.</text>
</comment>
<comment type="cofactor">
    <cofactor evidence="4">
        <name>Mo-bis(molybdopterin guanine dinucleotide)</name>
        <dbReference type="ChEBI" id="CHEBI:60539"/>
    </cofactor>
    <text evidence="1">Binds 1 molybdenum-bis(molybdopterin guanine dinucleotide) (Mo-bis-MGD) cofactor per subunit.</text>
</comment>
<comment type="biophysicochemical properties">
    <kinetics>
        <KM evidence="4">0.3 mM for arsenate</KM>
        <Vmax evidence="4">7013.0 umol/min/mg enzyme</Vmax>
    </kinetics>
</comment>
<comment type="subunit">
    <text evidence="4">Heterodimer composed of one large subunit (ArrA) and one small subunit (ArrB).</text>
</comment>
<comment type="subcellular location">
    <subcellularLocation>
        <location evidence="4">Periplasm</location>
    </subcellularLocation>
</comment>
<comment type="induction">
    <text evidence="4">Fully induced in the presence of arsenate.</text>
</comment>
<comment type="PTM">
    <text evidence="2 4">Predicted to be exported by the Tat system. The position of the signal peptide cleavage has been experimentally proven.</text>
</comment>
<comment type="miscellaneous">
    <text evidence="4">May also use zinc as a cofactor.</text>
</comment>
<comment type="similarity">
    <text evidence="6">Belongs to the prokaryotic molybdopterin-containing oxidoreductase family.</text>
</comment>
<reference key="1">
    <citation type="journal article" date="2004" name="Science">
        <title>arrA is a reliable marker for As(V) respiration.</title>
        <authorList>
            <person name="Malasarn D."/>
            <person name="Saltikov C.W."/>
            <person name="Campbell K.M."/>
            <person name="Santini J.M."/>
            <person name="Hering J.G."/>
            <person name="Newman D.K."/>
        </authorList>
    </citation>
    <scope>NUCLEOTIDE SEQUENCE [GENOMIC DNA]</scope>
    <source>
        <strain>ATCC 700172 / DSM 11915 / BAL-1</strain>
    </source>
</reference>
<reference key="2">
    <citation type="journal article" date="1998" name="Eur. J. Biochem.">
        <title>Purification and characterization of the respiratory arsenate reductase of Chrysiogenes arsenatis.</title>
        <authorList>
            <person name="Krafft T."/>
            <person name="Macy J.M."/>
        </authorList>
    </citation>
    <scope>PROTEIN SEQUENCE OF 30-58</scope>
    <scope>FUNCTION</scope>
    <scope>CATALYTIC ACTIVITY</scope>
    <scope>COFACTOR</scope>
    <scope>BIOPHYSICOCHEMICAL PROPERTIES</scope>
    <scope>SUBUNIT</scope>
    <scope>SUBCELLULAR LOCATION</scope>
    <scope>INDUCTION</scope>
</reference>
<feature type="signal peptide" description="Tat-type signal" evidence="2 4">
    <location>
        <begin position="1"/>
        <end position="29"/>
    </location>
</feature>
<feature type="chain" id="PRO_5004265100" description="Arsenate respiratory reductase molybdopterin-containing subunit ArrA">
    <location>
        <begin position="30"/>
        <end position="846"/>
    </location>
</feature>
<feature type="domain" description="4Fe-4S Mo/W bis-MGD-type" evidence="3">
    <location>
        <begin position="43"/>
        <end position="99"/>
    </location>
</feature>
<feature type="binding site" evidence="1">
    <location>
        <position position="50"/>
    </location>
    <ligand>
        <name>[4Fe-4S] cluster</name>
        <dbReference type="ChEBI" id="CHEBI:49883"/>
    </ligand>
</feature>
<feature type="binding site" evidence="1">
    <location>
        <position position="53"/>
    </location>
    <ligand>
        <name>[4Fe-4S] cluster</name>
        <dbReference type="ChEBI" id="CHEBI:49883"/>
    </ligand>
</feature>
<feature type="binding site" evidence="1">
    <location>
        <position position="57"/>
    </location>
    <ligand>
        <name>[4Fe-4S] cluster</name>
        <dbReference type="ChEBI" id="CHEBI:49883"/>
    </ligand>
</feature>
<feature type="binding site" evidence="1">
    <location>
        <position position="85"/>
    </location>
    <ligand>
        <name>[4Fe-4S] cluster</name>
        <dbReference type="ChEBI" id="CHEBI:49883"/>
    </ligand>
</feature>
<feature type="binding site" evidence="1">
    <location>
        <position position="155"/>
    </location>
    <ligand>
        <name>arsenite</name>
        <dbReference type="ChEBI" id="CHEBI:29242"/>
    </ligand>
</feature>
<feature type="binding site" evidence="1">
    <location>
        <position position="156"/>
    </location>
    <ligand>
        <name>arsenate</name>
        <dbReference type="ChEBI" id="CHEBI:48597"/>
    </ligand>
</feature>
<feature type="binding site" evidence="1">
    <location>
        <position position="179"/>
    </location>
    <ligand>
        <name>arsenite</name>
        <dbReference type="ChEBI" id="CHEBI:29242"/>
    </ligand>
</feature>
<feature type="binding site" evidence="1">
    <location>
        <position position="180"/>
    </location>
    <ligand>
        <name>arsenate</name>
        <dbReference type="ChEBI" id="CHEBI:48597"/>
    </ligand>
</feature>
<feature type="binding site" evidence="1">
    <location>
        <position position="183"/>
    </location>
    <ligand>
        <name>Mo-bis(molybdopterin guanine dinucleotide)</name>
        <dbReference type="ChEBI" id="CHEBI:60539"/>
    </ligand>
    <ligandPart>
        <name>Mo</name>
        <dbReference type="ChEBI" id="CHEBI:28685"/>
    </ligandPart>
</feature>
<feature type="binding site" evidence="1">
    <location>
        <position position="188"/>
    </location>
    <ligand>
        <name>arsenate</name>
        <dbReference type="ChEBI" id="CHEBI:48597"/>
    </ligand>
</feature>
<feature type="binding site" evidence="1">
    <location>
        <position position="200"/>
    </location>
    <ligand>
        <name>arsenite</name>
        <dbReference type="ChEBI" id="CHEBI:29242"/>
    </ligand>
</feature>
<evidence type="ECO:0000250" key="1">
    <source>
        <dbReference type="UniProtKB" id="Q7WTU0"/>
    </source>
</evidence>
<evidence type="ECO:0000255" key="2">
    <source>
        <dbReference type="PROSITE-ProRule" id="PRU00648"/>
    </source>
</evidence>
<evidence type="ECO:0000255" key="3">
    <source>
        <dbReference type="PROSITE-ProRule" id="PRU01004"/>
    </source>
</evidence>
<evidence type="ECO:0000269" key="4">
    <source>
    </source>
</evidence>
<evidence type="ECO:0000303" key="5">
    <source>
    </source>
</evidence>
<evidence type="ECO:0000305" key="6"/>
<evidence type="ECO:0000305" key="7">
    <source>
    </source>
</evidence>
<name>ARRA_CHRAT</name>
<keyword id="KW-0004">4Fe-4S</keyword>
<keyword id="KW-0903">Direct protein sequencing</keyword>
<keyword id="KW-0408">Iron</keyword>
<keyword id="KW-0411">Iron-sulfur</keyword>
<keyword id="KW-0479">Metal-binding</keyword>
<keyword id="KW-0500">Molybdenum</keyword>
<keyword id="KW-0560">Oxidoreductase</keyword>
<keyword id="KW-0574">Periplasm</keyword>
<keyword id="KW-0732">Signal</keyword>
<gene>
    <name evidence="5" type="primary">arrA</name>
</gene>
<accession>Q5Y818</accession>
<sequence length="846" mass="94209">MRIKRREFLKASAAVGAVAVASPTLNAFAQTGTGASAMGEAEGKWIPSTCQGCTTWCPVEFLFRMAVRSKYAATQLSKANNGYCCVRGHLMLQQLYDPDRIKTPMKRTNPVKGRKEDPKICPYHMGMKQWDTIADKIMELRKNNETHKYLLMRGRYSDHNSIFYGDLTKMIGSPNNISHSAICAEVEKMGSMATEGFWGYRDYDLDNMKYLIAWACDPLSSNRQIPNAIRKIQGVMDRGKVVAVDPRMNNTASKAQEWLPIKPSEDGALALAMAHVIITKGLWSKEFVGDFKDGKNKFVAGKTVKEEDFEEKLTNGIVKWWNLEVKDRTPKWAAKVTGIDEATIIRVATEFAQAAPACAIWYGPNMQPRGSYAVMCIHALNGLVGASDSEGGLCTGMGSPSSSYPKIDAYQDDVAKAGAKNKKIDQRGTLKFPAMGSAKPGTGVVTNNVADALLAADPYDIKVAIGYFCNFNFSGTDGARWDKALAKVPFFVHCVPMFSEMTYFADIVLPAALHHTEDWAVIRSKANLHGHTSIQQPVVERMFDVKGVETEITWLLAEKLKAKGFENMYNWLYNEYKDPETGKNPTNSLEFALYATKIRSKKCWDPKENAEYKGDKLNGWADFMEKGIVNSPKFKFRQKWEKGFPTETKKFEFYSETLKKGLLAHAEKNKVTVDQVMEATNYEARGELAFIPHYESPKRHGDVKEFPFSLIDMKSRLNREGRSTNATWYHAFKKCDPGDVNQEDVLQINPADAKKLGINEGDMVKVTSVIGSLTVKARLWEGVRPGCVAKCYGQGHFAMGRVSAKDFGKAVARGANFNDIMPADYDRITGATARNGGFTGVKIEKA</sequence>
<organism>
    <name type="scientific">Chrysiogenes arsenatis</name>
    <dbReference type="NCBI Taxonomy" id="309797"/>
    <lineage>
        <taxon>Bacteria</taxon>
        <taxon>Pseudomonadati</taxon>
        <taxon>Chrysiogenota</taxon>
        <taxon>Chrysiogenia</taxon>
        <taxon>Chrysiogenales</taxon>
        <taxon>Chrysiogenaceae</taxon>
        <taxon>Chrysiogenes</taxon>
    </lineage>
</organism>
<protein>
    <recommendedName>
        <fullName evidence="6">Arsenate respiratory reductase molybdopterin-containing subunit ArrA</fullName>
        <ecNumber evidence="4">1.20.99.1</ecNumber>
    </recommendedName>
    <alternativeName>
        <fullName evidence="6">Arsenate respiratory reductase large subunit</fullName>
        <shortName evidence="6">ARR large subunit</shortName>
    </alternativeName>
</protein>
<proteinExistence type="evidence at protein level"/>
<dbReference type="EC" id="1.20.99.1" evidence="4"/>
<dbReference type="EMBL" id="AY660883">
    <property type="protein sequence ID" value="AAU11839.1"/>
    <property type="molecule type" value="Genomic_DNA"/>
</dbReference>
<dbReference type="SMR" id="Q5Y818"/>
<dbReference type="BioCyc" id="MetaCyc:MONOMER-10841"/>
<dbReference type="GO" id="GO:0042597">
    <property type="term" value="C:periplasmic space"/>
    <property type="evidence" value="ECO:0007669"/>
    <property type="project" value="UniProtKB-SubCell"/>
</dbReference>
<dbReference type="GO" id="GO:0051539">
    <property type="term" value="F:4 iron, 4 sulfur cluster binding"/>
    <property type="evidence" value="ECO:0007669"/>
    <property type="project" value="UniProtKB-KW"/>
</dbReference>
<dbReference type="GO" id="GO:0046872">
    <property type="term" value="F:metal ion binding"/>
    <property type="evidence" value="ECO:0007669"/>
    <property type="project" value="UniProtKB-KW"/>
</dbReference>
<dbReference type="GO" id="GO:0043546">
    <property type="term" value="F:molybdopterin cofactor binding"/>
    <property type="evidence" value="ECO:0007669"/>
    <property type="project" value="InterPro"/>
</dbReference>
<dbReference type="GO" id="GO:0016491">
    <property type="term" value="F:oxidoreductase activity"/>
    <property type="evidence" value="ECO:0007669"/>
    <property type="project" value="UniProtKB-KW"/>
</dbReference>
<dbReference type="CDD" id="cd02757">
    <property type="entry name" value="MopB_Arsenate-R"/>
    <property type="match status" value="1"/>
</dbReference>
<dbReference type="CDD" id="cd02780">
    <property type="entry name" value="MopB_CT_Tetrathionate_Arsenate-R"/>
    <property type="match status" value="1"/>
</dbReference>
<dbReference type="Gene3D" id="2.40.40.20">
    <property type="match status" value="1"/>
</dbReference>
<dbReference type="Gene3D" id="3.40.50.740">
    <property type="match status" value="1"/>
</dbReference>
<dbReference type="Gene3D" id="2.20.25.90">
    <property type="entry name" value="ADC-like domains"/>
    <property type="match status" value="1"/>
</dbReference>
<dbReference type="Gene3D" id="3.40.228.10">
    <property type="entry name" value="Dimethylsulfoxide Reductase, domain 2"/>
    <property type="match status" value="1"/>
</dbReference>
<dbReference type="Gene3D" id="3.30.2070.10">
    <property type="entry name" value="Formate dehydrogenase/DMSO reductase"/>
    <property type="match status" value="1"/>
</dbReference>
<dbReference type="InterPro" id="IPR009010">
    <property type="entry name" value="Asp_de-COase-like_dom_sf"/>
</dbReference>
<dbReference type="InterPro" id="IPR037946">
    <property type="entry name" value="MopB_CT_Tetrathionate"/>
</dbReference>
<dbReference type="InterPro" id="IPR006657">
    <property type="entry name" value="MoPterin_dinucl-bd_dom"/>
</dbReference>
<dbReference type="InterPro" id="IPR006656">
    <property type="entry name" value="Mopterin_OxRdtase"/>
</dbReference>
<dbReference type="InterPro" id="IPR006963">
    <property type="entry name" value="Mopterin_OxRdtase_4Fe-4S_dom"/>
</dbReference>
<dbReference type="InterPro" id="IPR050612">
    <property type="entry name" value="Prok_Mopterin_Oxidored"/>
</dbReference>
<dbReference type="InterPro" id="IPR006311">
    <property type="entry name" value="TAT_signal"/>
</dbReference>
<dbReference type="InterPro" id="IPR019546">
    <property type="entry name" value="TAT_signal_bac_arc"/>
</dbReference>
<dbReference type="NCBIfam" id="TIGR01409">
    <property type="entry name" value="TAT_signal_seq"/>
    <property type="match status" value="1"/>
</dbReference>
<dbReference type="PANTHER" id="PTHR43742:SF9">
    <property type="entry name" value="TETRATHIONATE REDUCTASE SUBUNIT A"/>
    <property type="match status" value="1"/>
</dbReference>
<dbReference type="PANTHER" id="PTHR43742">
    <property type="entry name" value="TRIMETHYLAMINE-N-OXIDE REDUCTASE"/>
    <property type="match status" value="1"/>
</dbReference>
<dbReference type="Pfam" id="PF04879">
    <property type="entry name" value="Molybdop_Fe4S4"/>
    <property type="match status" value="1"/>
</dbReference>
<dbReference type="Pfam" id="PF00384">
    <property type="entry name" value="Molybdopterin"/>
    <property type="match status" value="1"/>
</dbReference>
<dbReference type="Pfam" id="PF01568">
    <property type="entry name" value="Molydop_binding"/>
    <property type="match status" value="1"/>
</dbReference>
<dbReference type="SUPFAM" id="SSF50692">
    <property type="entry name" value="ADC-like"/>
    <property type="match status" value="1"/>
</dbReference>
<dbReference type="SUPFAM" id="SSF53706">
    <property type="entry name" value="Formate dehydrogenase/DMSO reductase, domains 1-3"/>
    <property type="match status" value="1"/>
</dbReference>
<dbReference type="PROSITE" id="PS51669">
    <property type="entry name" value="4FE4S_MOW_BIS_MGD"/>
    <property type="match status" value="1"/>
</dbReference>
<dbReference type="PROSITE" id="PS51318">
    <property type="entry name" value="TAT"/>
    <property type="match status" value="1"/>
</dbReference>